<protein>
    <recommendedName>
        <fullName evidence="1">S-adenosylmethionine synthase</fullName>
        <shortName evidence="1">AdoMet synthase</shortName>
        <ecNumber evidence="1">2.5.1.6</ecNumber>
    </recommendedName>
    <alternativeName>
        <fullName evidence="1">MAT</fullName>
    </alternativeName>
    <alternativeName>
        <fullName evidence="1">Methionine adenosyltransferase</fullName>
    </alternativeName>
</protein>
<evidence type="ECO:0000255" key="1">
    <source>
        <dbReference type="HAMAP-Rule" id="MF_00086"/>
    </source>
</evidence>
<accession>C5CD66</accession>
<gene>
    <name evidence="1" type="primary">metK</name>
    <name type="ordered locus">Kole_0285</name>
</gene>
<name>METK_KOSOT</name>
<keyword id="KW-0067">ATP-binding</keyword>
<keyword id="KW-0963">Cytoplasm</keyword>
<keyword id="KW-0460">Magnesium</keyword>
<keyword id="KW-0479">Metal-binding</keyword>
<keyword id="KW-0547">Nucleotide-binding</keyword>
<keyword id="KW-0554">One-carbon metabolism</keyword>
<keyword id="KW-0630">Potassium</keyword>
<keyword id="KW-1185">Reference proteome</keyword>
<keyword id="KW-0808">Transferase</keyword>
<proteinExistence type="inferred from homology"/>
<reference key="1">
    <citation type="submission" date="2009-06" db="EMBL/GenBank/DDBJ databases">
        <title>Complete sequence of Thermotogales bacterium TBF 19.5.1.</title>
        <authorList>
            <consortium name="US DOE Joint Genome Institute"/>
            <person name="Lucas S."/>
            <person name="Copeland A."/>
            <person name="Lapidus A."/>
            <person name="Glavina del Rio T."/>
            <person name="Tice H."/>
            <person name="Bruce D."/>
            <person name="Goodwin L."/>
            <person name="Pitluck S."/>
            <person name="Chertkov O."/>
            <person name="Brettin T."/>
            <person name="Detter J.C."/>
            <person name="Han C."/>
            <person name="Schmutz J."/>
            <person name="Larimer F."/>
            <person name="Land M."/>
            <person name="Hauser L."/>
            <person name="Kyrpides N."/>
            <person name="Ovchinnikova G."/>
            <person name="Noll K."/>
        </authorList>
    </citation>
    <scope>NUCLEOTIDE SEQUENCE [LARGE SCALE GENOMIC DNA]</scope>
    <source>
        <strain>ATCC BAA-1733 / DSM 21960 / TBF 19.5.1</strain>
    </source>
</reference>
<sequence>MKKWLFTSESVTEGHPDKIADQVSDAILDAMLEQDPESRVAVETLVATGVAVVAGEVTTKAYVDIPRIVRDTILEIGYTRAKFGFDGETCAVLTSIDEQSPDIALGVNKSLEAKNDGKDKYDIIGAGDQGMMFGYATNETEEMMPLPIVLAHNLARRLATVRKERIVEGFRPDGKTQVTVLYEDGKPIGVKTIVVSTQHDPAMTQEEIEQLVKEHVIKAVVPEEMMLDGIETFVNPTGRFVKGGPAADTGLTGRKIIVDTYGGWIPHGGGAFSGKDPTKVDRSAHYMARYVAKNIVAAGLADRVTLQIAYAIGVAHPVSFMIDAHGTEKVALEKLEKVVKEVFDFRPAAIIDKLNLRRPIYKQVAAYGHFGRIDVEVPWEKLDAVDELKRAFNM</sequence>
<dbReference type="EC" id="2.5.1.6" evidence="1"/>
<dbReference type="EMBL" id="CP001634">
    <property type="protein sequence ID" value="ACR79010.1"/>
    <property type="molecule type" value="Genomic_DNA"/>
</dbReference>
<dbReference type="RefSeq" id="WP_012744797.1">
    <property type="nucleotide sequence ID" value="NC_012785.1"/>
</dbReference>
<dbReference type="SMR" id="C5CD66"/>
<dbReference type="STRING" id="521045.Kole_0285"/>
<dbReference type="KEGG" id="kol:Kole_0285"/>
<dbReference type="eggNOG" id="COG0192">
    <property type="taxonomic scope" value="Bacteria"/>
</dbReference>
<dbReference type="HOGENOM" id="CLU_041802_1_1_0"/>
<dbReference type="OrthoDB" id="9801686at2"/>
<dbReference type="UniPathway" id="UPA00315">
    <property type="reaction ID" value="UER00080"/>
</dbReference>
<dbReference type="Proteomes" id="UP000002382">
    <property type="component" value="Chromosome"/>
</dbReference>
<dbReference type="GO" id="GO:0005737">
    <property type="term" value="C:cytoplasm"/>
    <property type="evidence" value="ECO:0007669"/>
    <property type="project" value="UniProtKB-SubCell"/>
</dbReference>
<dbReference type="GO" id="GO:0005524">
    <property type="term" value="F:ATP binding"/>
    <property type="evidence" value="ECO:0007669"/>
    <property type="project" value="UniProtKB-UniRule"/>
</dbReference>
<dbReference type="GO" id="GO:0000287">
    <property type="term" value="F:magnesium ion binding"/>
    <property type="evidence" value="ECO:0007669"/>
    <property type="project" value="UniProtKB-UniRule"/>
</dbReference>
<dbReference type="GO" id="GO:0004478">
    <property type="term" value="F:methionine adenosyltransferase activity"/>
    <property type="evidence" value="ECO:0007669"/>
    <property type="project" value="UniProtKB-UniRule"/>
</dbReference>
<dbReference type="GO" id="GO:0006730">
    <property type="term" value="P:one-carbon metabolic process"/>
    <property type="evidence" value="ECO:0007669"/>
    <property type="project" value="UniProtKB-KW"/>
</dbReference>
<dbReference type="GO" id="GO:0006556">
    <property type="term" value="P:S-adenosylmethionine biosynthetic process"/>
    <property type="evidence" value="ECO:0007669"/>
    <property type="project" value="UniProtKB-UniRule"/>
</dbReference>
<dbReference type="CDD" id="cd18079">
    <property type="entry name" value="S-AdoMet_synt"/>
    <property type="match status" value="1"/>
</dbReference>
<dbReference type="FunFam" id="3.30.300.10:FF:000003">
    <property type="entry name" value="S-adenosylmethionine synthase"/>
    <property type="match status" value="1"/>
</dbReference>
<dbReference type="Gene3D" id="3.30.300.10">
    <property type="match status" value="3"/>
</dbReference>
<dbReference type="HAMAP" id="MF_00086">
    <property type="entry name" value="S_AdoMet_synth1"/>
    <property type="match status" value="1"/>
</dbReference>
<dbReference type="InterPro" id="IPR022631">
    <property type="entry name" value="ADOMET_SYNTHASE_CS"/>
</dbReference>
<dbReference type="InterPro" id="IPR022630">
    <property type="entry name" value="S-AdoMet_synt_C"/>
</dbReference>
<dbReference type="InterPro" id="IPR022629">
    <property type="entry name" value="S-AdoMet_synt_central"/>
</dbReference>
<dbReference type="InterPro" id="IPR022628">
    <property type="entry name" value="S-AdoMet_synt_N"/>
</dbReference>
<dbReference type="InterPro" id="IPR002133">
    <property type="entry name" value="S-AdoMet_synthetase"/>
</dbReference>
<dbReference type="InterPro" id="IPR022636">
    <property type="entry name" value="S-AdoMet_synthetase_sfam"/>
</dbReference>
<dbReference type="NCBIfam" id="TIGR01034">
    <property type="entry name" value="metK"/>
    <property type="match status" value="1"/>
</dbReference>
<dbReference type="PANTHER" id="PTHR11964">
    <property type="entry name" value="S-ADENOSYLMETHIONINE SYNTHETASE"/>
    <property type="match status" value="1"/>
</dbReference>
<dbReference type="Pfam" id="PF02773">
    <property type="entry name" value="S-AdoMet_synt_C"/>
    <property type="match status" value="1"/>
</dbReference>
<dbReference type="Pfam" id="PF02772">
    <property type="entry name" value="S-AdoMet_synt_M"/>
    <property type="match status" value="1"/>
</dbReference>
<dbReference type="Pfam" id="PF00438">
    <property type="entry name" value="S-AdoMet_synt_N"/>
    <property type="match status" value="1"/>
</dbReference>
<dbReference type="PIRSF" id="PIRSF000497">
    <property type="entry name" value="MAT"/>
    <property type="match status" value="1"/>
</dbReference>
<dbReference type="SUPFAM" id="SSF55973">
    <property type="entry name" value="S-adenosylmethionine synthetase"/>
    <property type="match status" value="3"/>
</dbReference>
<dbReference type="PROSITE" id="PS00376">
    <property type="entry name" value="ADOMET_SYNTHASE_1"/>
    <property type="match status" value="1"/>
</dbReference>
<dbReference type="PROSITE" id="PS00377">
    <property type="entry name" value="ADOMET_SYNTHASE_2"/>
    <property type="match status" value="1"/>
</dbReference>
<organism>
    <name type="scientific">Kosmotoga olearia (strain ATCC BAA-1733 / DSM 21960 / TBF 19.5.1)</name>
    <dbReference type="NCBI Taxonomy" id="521045"/>
    <lineage>
        <taxon>Bacteria</taxon>
        <taxon>Thermotogati</taxon>
        <taxon>Thermotogota</taxon>
        <taxon>Thermotogae</taxon>
        <taxon>Kosmotogales</taxon>
        <taxon>Kosmotogaceae</taxon>
        <taxon>Kosmotoga</taxon>
    </lineage>
</organism>
<comment type="function">
    <text evidence="1">Catalyzes the formation of S-adenosylmethionine (AdoMet) from methionine and ATP. The overall synthetic reaction is composed of two sequential steps, AdoMet formation and the subsequent tripolyphosphate hydrolysis which occurs prior to release of AdoMet from the enzyme.</text>
</comment>
<comment type="catalytic activity">
    <reaction evidence="1">
        <text>L-methionine + ATP + H2O = S-adenosyl-L-methionine + phosphate + diphosphate</text>
        <dbReference type="Rhea" id="RHEA:21080"/>
        <dbReference type="ChEBI" id="CHEBI:15377"/>
        <dbReference type="ChEBI" id="CHEBI:30616"/>
        <dbReference type="ChEBI" id="CHEBI:33019"/>
        <dbReference type="ChEBI" id="CHEBI:43474"/>
        <dbReference type="ChEBI" id="CHEBI:57844"/>
        <dbReference type="ChEBI" id="CHEBI:59789"/>
        <dbReference type="EC" id="2.5.1.6"/>
    </reaction>
</comment>
<comment type="cofactor">
    <cofactor evidence="1">
        <name>Mg(2+)</name>
        <dbReference type="ChEBI" id="CHEBI:18420"/>
    </cofactor>
    <text evidence="1">Binds 2 divalent ions per subunit.</text>
</comment>
<comment type="cofactor">
    <cofactor evidence="1">
        <name>K(+)</name>
        <dbReference type="ChEBI" id="CHEBI:29103"/>
    </cofactor>
    <text evidence="1">Binds 1 potassium ion per subunit.</text>
</comment>
<comment type="pathway">
    <text evidence="1">Amino-acid biosynthesis; S-adenosyl-L-methionine biosynthesis; S-adenosyl-L-methionine from L-methionine: step 1/1.</text>
</comment>
<comment type="subunit">
    <text evidence="1">Homotetramer; dimer of dimers.</text>
</comment>
<comment type="subcellular location">
    <subcellularLocation>
        <location evidence="1">Cytoplasm</location>
    </subcellularLocation>
</comment>
<comment type="similarity">
    <text evidence="1">Belongs to the AdoMet synthase family.</text>
</comment>
<feature type="chain" id="PRO_1000202621" description="S-adenosylmethionine synthase">
    <location>
        <begin position="1"/>
        <end position="394"/>
    </location>
</feature>
<feature type="region of interest" description="Flexible loop" evidence="1">
    <location>
        <begin position="99"/>
        <end position="109"/>
    </location>
</feature>
<feature type="binding site" description="in other chain" evidence="1">
    <location>
        <position position="15"/>
    </location>
    <ligand>
        <name>ATP</name>
        <dbReference type="ChEBI" id="CHEBI:30616"/>
        <note>ligand shared between two neighboring subunits</note>
    </ligand>
</feature>
<feature type="binding site" evidence="1">
    <location>
        <position position="17"/>
    </location>
    <ligand>
        <name>Mg(2+)</name>
        <dbReference type="ChEBI" id="CHEBI:18420"/>
    </ligand>
</feature>
<feature type="binding site" evidence="1">
    <location>
        <position position="43"/>
    </location>
    <ligand>
        <name>K(+)</name>
        <dbReference type="ChEBI" id="CHEBI:29103"/>
    </ligand>
</feature>
<feature type="binding site" description="in other chain" evidence="1">
    <location>
        <position position="56"/>
    </location>
    <ligand>
        <name>L-methionine</name>
        <dbReference type="ChEBI" id="CHEBI:57844"/>
        <note>ligand shared between two neighboring subunits</note>
    </ligand>
</feature>
<feature type="binding site" description="in other chain" evidence="1">
    <location>
        <position position="99"/>
    </location>
    <ligand>
        <name>L-methionine</name>
        <dbReference type="ChEBI" id="CHEBI:57844"/>
        <note>ligand shared between two neighboring subunits</note>
    </ligand>
</feature>
<feature type="binding site" description="in other chain" evidence="1">
    <location>
        <begin position="173"/>
        <end position="175"/>
    </location>
    <ligand>
        <name>ATP</name>
        <dbReference type="ChEBI" id="CHEBI:30616"/>
        <note>ligand shared between two neighboring subunits</note>
    </ligand>
</feature>
<feature type="binding site" description="in other chain" evidence="1">
    <location>
        <begin position="239"/>
        <end position="240"/>
    </location>
    <ligand>
        <name>ATP</name>
        <dbReference type="ChEBI" id="CHEBI:30616"/>
        <note>ligand shared between two neighboring subunits</note>
    </ligand>
</feature>
<feature type="binding site" evidence="1">
    <location>
        <position position="248"/>
    </location>
    <ligand>
        <name>ATP</name>
        <dbReference type="ChEBI" id="CHEBI:30616"/>
        <note>ligand shared between two neighboring subunits</note>
    </ligand>
</feature>
<feature type="binding site" evidence="1">
    <location>
        <position position="248"/>
    </location>
    <ligand>
        <name>L-methionine</name>
        <dbReference type="ChEBI" id="CHEBI:57844"/>
        <note>ligand shared between two neighboring subunits</note>
    </ligand>
</feature>
<feature type="binding site" description="in other chain" evidence="1">
    <location>
        <begin position="254"/>
        <end position="255"/>
    </location>
    <ligand>
        <name>ATP</name>
        <dbReference type="ChEBI" id="CHEBI:30616"/>
        <note>ligand shared between two neighboring subunits</note>
    </ligand>
</feature>
<feature type="binding site" evidence="1">
    <location>
        <position position="271"/>
    </location>
    <ligand>
        <name>ATP</name>
        <dbReference type="ChEBI" id="CHEBI:30616"/>
        <note>ligand shared between two neighboring subunits</note>
    </ligand>
</feature>
<feature type="binding site" evidence="1">
    <location>
        <position position="275"/>
    </location>
    <ligand>
        <name>ATP</name>
        <dbReference type="ChEBI" id="CHEBI:30616"/>
        <note>ligand shared between two neighboring subunits</note>
    </ligand>
</feature>
<feature type="binding site" description="in other chain" evidence="1">
    <location>
        <position position="279"/>
    </location>
    <ligand>
        <name>L-methionine</name>
        <dbReference type="ChEBI" id="CHEBI:57844"/>
        <note>ligand shared between two neighboring subunits</note>
    </ligand>
</feature>